<accession>Q1LPI8</accession>
<name>PYRG_CUPMC</name>
<comment type="function">
    <text evidence="1">Catalyzes the ATP-dependent amination of UTP to CTP with either L-glutamine or ammonia as the source of nitrogen. Regulates intracellular CTP levels through interactions with the four ribonucleotide triphosphates.</text>
</comment>
<comment type="catalytic activity">
    <reaction evidence="1">
        <text>UTP + L-glutamine + ATP + H2O = CTP + L-glutamate + ADP + phosphate + 2 H(+)</text>
        <dbReference type="Rhea" id="RHEA:26426"/>
        <dbReference type="ChEBI" id="CHEBI:15377"/>
        <dbReference type="ChEBI" id="CHEBI:15378"/>
        <dbReference type="ChEBI" id="CHEBI:29985"/>
        <dbReference type="ChEBI" id="CHEBI:30616"/>
        <dbReference type="ChEBI" id="CHEBI:37563"/>
        <dbReference type="ChEBI" id="CHEBI:43474"/>
        <dbReference type="ChEBI" id="CHEBI:46398"/>
        <dbReference type="ChEBI" id="CHEBI:58359"/>
        <dbReference type="ChEBI" id="CHEBI:456216"/>
        <dbReference type="EC" id="6.3.4.2"/>
    </reaction>
</comment>
<comment type="catalytic activity">
    <reaction evidence="1">
        <text>L-glutamine + H2O = L-glutamate + NH4(+)</text>
        <dbReference type="Rhea" id="RHEA:15889"/>
        <dbReference type="ChEBI" id="CHEBI:15377"/>
        <dbReference type="ChEBI" id="CHEBI:28938"/>
        <dbReference type="ChEBI" id="CHEBI:29985"/>
        <dbReference type="ChEBI" id="CHEBI:58359"/>
    </reaction>
</comment>
<comment type="catalytic activity">
    <reaction evidence="1">
        <text>UTP + NH4(+) + ATP = CTP + ADP + phosphate + 2 H(+)</text>
        <dbReference type="Rhea" id="RHEA:16597"/>
        <dbReference type="ChEBI" id="CHEBI:15378"/>
        <dbReference type="ChEBI" id="CHEBI:28938"/>
        <dbReference type="ChEBI" id="CHEBI:30616"/>
        <dbReference type="ChEBI" id="CHEBI:37563"/>
        <dbReference type="ChEBI" id="CHEBI:43474"/>
        <dbReference type="ChEBI" id="CHEBI:46398"/>
        <dbReference type="ChEBI" id="CHEBI:456216"/>
    </reaction>
</comment>
<comment type="activity regulation">
    <text evidence="1">Allosterically activated by GTP, when glutamine is the substrate; GTP has no effect on the reaction when ammonia is the substrate. The allosteric effector GTP functions by stabilizing the protein conformation that binds the tetrahedral intermediate(s) formed during glutamine hydrolysis. Inhibited by the product CTP, via allosteric rather than competitive inhibition.</text>
</comment>
<comment type="pathway">
    <text evidence="1">Pyrimidine metabolism; CTP biosynthesis via de novo pathway; CTP from UDP: step 2/2.</text>
</comment>
<comment type="subunit">
    <text evidence="1">Homotetramer.</text>
</comment>
<comment type="miscellaneous">
    <text evidence="1">CTPSs have evolved a hybrid strategy for distinguishing between UTP and CTP. The overlapping regions of the product feedback inhibitory and substrate sites recognize a common feature in both compounds, the triphosphate moiety. To differentiate isosteric substrate and product pyrimidine rings, an additional pocket far from the expected kinase/ligase catalytic site, specifically recognizes the cytosine and ribose portions of the product inhibitor.</text>
</comment>
<comment type="similarity">
    <text evidence="1">Belongs to the CTP synthase family.</text>
</comment>
<keyword id="KW-0067">ATP-binding</keyword>
<keyword id="KW-0315">Glutamine amidotransferase</keyword>
<keyword id="KW-0436">Ligase</keyword>
<keyword id="KW-0460">Magnesium</keyword>
<keyword id="KW-0479">Metal-binding</keyword>
<keyword id="KW-0547">Nucleotide-binding</keyword>
<keyword id="KW-0665">Pyrimidine biosynthesis</keyword>
<keyword id="KW-1185">Reference proteome</keyword>
<protein>
    <recommendedName>
        <fullName evidence="1">CTP synthase</fullName>
        <ecNumber evidence="1">6.3.4.2</ecNumber>
    </recommendedName>
    <alternativeName>
        <fullName evidence="1">Cytidine 5'-triphosphate synthase</fullName>
    </alternativeName>
    <alternativeName>
        <fullName evidence="1">Cytidine triphosphate synthetase</fullName>
        <shortName evidence="1">CTP synthetase</shortName>
        <shortName evidence="1">CTPS</shortName>
    </alternativeName>
    <alternativeName>
        <fullName evidence="1">UTP--ammonia ligase</fullName>
    </alternativeName>
</protein>
<evidence type="ECO:0000255" key="1">
    <source>
        <dbReference type="HAMAP-Rule" id="MF_01227"/>
    </source>
</evidence>
<organism>
    <name type="scientific">Cupriavidus metallidurans (strain ATCC 43123 / DSM 2839 / NBRC 102507 / CH34)</name>
    <name type="common">Ralstonia metallidurans</name>
    <dbReference type="NCBI Taxonomy" id="266264"/>
    <lineage>
        <taxon>Bacteria</taxon>
        <taxon>Pseudomonadati</taxon>
        <taxon>Pseudomonadota</taxon>
        <taxon>Betaproteobacteria</taxon>
        <taxon>Burkholderiales</taxon>
        <taxon>Burkholderiaceae</taxon>
        <taxon>Cupriavidus</taxon>
    </lineage>
</organism>
<dbReference type="EC" id="6.3.4.2" evidence="1"/>
<dbReference type="EMBL" id="CP000352">
    <property type="protein sequence ID" value="ABF07938.1"/>
    <property type="molecule type" value="Genomic_DNA"/>
</dbReference>
<dbReference type="RefSeq" id="WP_011515844.1">
    <property type="nucleotide sequence ID" value="NC_007973.1"/>
</dbReference>
<dbReference type="SMR" id="Q1LPI8"/>
<dbReference type="STRING" id="266264.Rmet_1052"/>
<dbReference type="MEROPS" id="C26.964"/>
<dbReference type="KEGG" id="rme:Rmet_1052"/>
<dbReference type="eggNOG" id="COG0504">
    <property type="taxonomic scope" value="Bacteria"/>
</dbReference>
<dbReference type="HOGENOM" id="CLU_011675_5_0_4"/>
<dbReference type="UniPathway" id="UPA00159">
    <property type="reaction ID" value="UER00277"/>
</dbReference>
<dbReference type="Proteomes" id="UP000002429">
    <property type="component" value="Chromosome"/>
</dbReference>
<dbReference type="GO" id="GO:0005829">
    <property type="term" value="C:cytosol"/>
    <property type="evidence" value="ECO:0007669"/>
    <property type="project" value="TreeGrafter"/>
</dbReference>
<dbReference type="GO" id="GO:0005524">
    <property type="term" value="F:ATP binding"/>
    <property type="evidence" value="ECO:0007669"/>
    <property type="project" value="UniProtKB-KW"/>
</dbReference>
<dbReference type="GO" id="GO:0003883">
    <property type="term" value="F:CTP synthase activity"/>
    <property type="evidence" value="ECO:0007669"/>
    <property type="project" value="UniProtKB-UniRule"/>
</dbReference>
<dbReference type="GO" id="GO:0004359">
    <property type="term" value="F:glutaminase activity"/>
    <property type="evidence" value="ECO:0007669"/>
    <property type="project" value="RHEA"/>
</dbReference>
<dbReference type="GO" id="GO:0042802">
    <property type="term" value="F:identical protein binding"/>
    <property type="evidence" value="ECO:0007669"/>
    <property type="project" value="TreeGrafter"/>
</dbReference>
<dbReference type="GO" id="GO:0046872">
    <property type="term" value="F:metal ion binding"/>
    <property type="evidence" value="ECO:0007669"/>
    <property type="project" value="UniProtKB-KW"/>
</dbReference>
<dbReference type="GO" id="GO:0044210">
    <property type="term" value="P:'de novo' CTP biosynthetic process"/>
    <property type="evidence" value="ECO:0007669"/>
    <property type="project" value="UniProtKB-UniRule"/>
</dbReference>
<dbReference type="GO" id="GO:0019856">
    <property type="term" value="P:pyrimidine nucleobase biosynthetic process"/>
    <property type="evidence" value="ECO:0007669"/>
    <property type="project" value="TreeGrafter"/>
</dbReference>
<dbReference type="CDD" id="cd03113">
    <property type="entry name" value="CTPS_N"/>
    <property type="match status" value="1"/>
</dbReference>
<dbReference type="CDD" id="cd01746">
    <property type="entry name" value="GATase1_CTP_Synthase"/>
    <property type="match status" value="1"/>
</dbReference>
<dbReference type="FunFam" id="3.40.50.300:FF:000009">
    <property type="entry name" value="CTP synthase"/>
    <property type="match status" value="1"/>
</dbReference>
<dbReference type="FunFam" id="3.40.50.880:FF:000002">
    <property type="entry name" value="CTP synthase"/>
    <property type="match status" value="1"/>
</dbReference>
<dbReference type="Gene3D" id="3.40.50.880">
    <property type="match status" value="1"/>
</dbReference>
<dbReference type="Gene3D" id="3.40.50.300">
    <property type="entry name" value="P-loop containing nucleotide triphosphate hydrolases"/>
    <property type="match status" value="1"/>
</dbReference>
<dbReference type="HAMAP" id="MF_01227">
    <property type="entry name" value="PyrG"/>
    <property type="match status" value="1"/>
</dbReference>
<dbReference type="InterPro" id="IPR029062">
    <property type="entry name" value="Class_I_gatase-like"/>
</dbReference>
<dbReference type="InterPro" id="IPR004468">
    <property type="entry name" value="CTP_synthase"/>
</dbReference>
<dbReference type="InterPro" id="IPR017456">
    <property type="entry name" value="CTP_synthase_N"/>
</dbReference>
<dbReference type="InterPro" id="IPR017926">
    <property type="entry name" value="GATASE"/>
</dbReference>
<dbReference type="InterPro" id="IPR033828">
    <property type="entry name" value="GATase1_CTP_Synthase"/>
</dbReference>
<dbReference type="InterPro" id="IPR027417">
    <property type="entry name" value="P-loop_NTPase"/>
</dbReference>
<dbReference type="NCBIfam" id="NF003792">
    <property type="entry name" value="PRK05380.1"/>
    <property type="match status" value="1"/>
</dbReference>
<dbReference type="NCBIfam" id="TIGR00337">
    <property type="entry name" value="PyrG"/>
    <property type="match status" value="1"/>
</dbReference>
<dbReference type="PANTHER" id="PTHR11550">
    <property type="entry name" value="CTP SYNTHASE"/>
    <property type="match status" value="1"/>
</dbReference>
<dbReference type="PANTHER" id="PTHR11550:SF0">
    <property type="entry name" value="CTP SYNTHASE-RELATED"/>
    <property type="match status" value="1"/>
</dbReference>
<dbReference type="Pfam" id="PF06418">
    <property type="entry name" value="CTP_synth_N"/>
    <property type="match status" value="1"/>
</dbReference>
<dbReference type="Pfam" id="PF00117">
    <property type="entry name" value="GATase"/>
    <property type="match status" value="1"/>
</dbReference>
<dbReference type="SUPFAM" id="SSF52317">
    <property type="entry name" value="Class I glutamine amidotransferase-like"/>
    <property type="match status" value="1"/>
</dbReference>
<dbReference type="SUPFAM" id="SSF52540">
    <property type="entry name" value="P-loop containing nucleoside triphosphate hydrolases"/>
    <property type="match status" value="1"/>
</dbReference>
<dbReference type="PROSITE" id="PS51273">
    <property type="entry name" value="GATASE_TYPE_1"/>
    <property type="match status" value="1"/>
</dbReference>
<proteinExistence type="inferred from homology"/>
<reference key="1">
    <citation type="journal article" date="2010" name="PLoS ONE">
        <title>The complete genome sequence of Cupriavidus metallidurans strain CH34, a master survivalist in harsh and anthropogenic environments.</title>
        <authorList>
            <person name="Janssen P.J."/>
            <person name="Van Houdt R."/>
            <person name="Moors H."/>
            <person name="Monsieurs P."/>
            <person name="Morin N."/>
            <person name="Michaux A."/>
            <person name="Benotmane M.A."/>
            <person name="Leys N."/>
            <person name="Vallaeys T."/>
            <person name="Lapidus A."/>
            <person name="Monchy S."/>
            <person name="Medigue C."/>
            <person name="Taghavi S."/>
            <person name="McCorkle S."/>
            <person name="Dunn J."/>
            <person name="van der Lelie D."/>
            <person name="Mergeay M."/>
        </authorList>
    </citation>
    <scope>NUCLEOTIDE SEQUENCE [LARGE SCALE GENOMIC DNA]</scope>
    <source>
        <strain>ATCC 43123 / DSM 2839 / NBRC 102507 / CH34</strain>
    </source>
</reference>
<gene>
    <name evidence="1" type="primary">pyrG</name>
    <name type="ordered locus">Rmet_1052</name>
</gene>
<feature type="chain" id="PRO_0000266192" description="CTP synthase">
    <location>
        <begin position="1"/>
        <end position="549"/>
    </location>
</feature>
<feature type="domain" description="Glutamine amidotransferase type-1" evidence="1">
    <location>
        <begin position="295"/>
        <end position="547"/>
    </location>
</feature>
<feature type="region of interest" description="Amidoligase domain" evidence="1">
    <location>
        <begin position="1"/>
        <end position="270"/>
    </location>
</feature>
<feature type="active site" description="Nucleophile; for glutamine hydrolysis" evidence="1">
    <location>
        <position position="383"/>
    </location>
</feature>
<feature type="active site" evidence="1">
    <location>
        <position position="520"/>
    </location>
</feature>
<feature type="active site" evidence="1">
    <location>
        <position position="522"/>
    </location>
</feature>
<feature type="binding site" evidence="1">
    <location>
        <position position="13"/>
    </location>
    <ligand>
        <name>CTP</name>
        <dbReference type="ChEBI" id="CHEBI:37563"/>
        <note>allosteric inhibitor</note>
    </ligand>
</feature>
<feature type="binding site" evidence="1">
    <location>
        <position position="13"/>
    </location>
    <ligand>
        <name>UTP</name>
        <dbReference type="ChEBI" id="CHEBI:46398"/>
    </ligand>
</feature>
<feature type="binding site" evidence="1">
    <location>
        <begin position="14"/>
        <end position="19"/>
    </location>
    <ligand>
        <name>ATP</name>
        <dbReference type="ChEBI" id="CHEBI:30616"/>
    </ligand>
</feature>
<feature type="binding site" evidence="1">
    <location>
        <position position="71"/>
    </location>
    <ligand>
        <name>ATP</name>
        <dbReference type="ChEBI" id="CHEBI:30616"/>
    </ligand>
</feature>
<feature type="binding site" evidence="1">
    <location>
        <position position="71"/>
    </location>
    <ligand>
        <name>Mg(2+)</name>
        <dbReference type="ChEBI" id="CHEBI:18420"/>
    </ligand>
</feature>
<feature type="binding site" evidence="1">
    <location>
        <position position="144"/>
    </location>
    <ligand>
        <name>Mg(2+)</name>
        <dbReference type="ChEBI" id="CHEBI:18420"/>
    </ligand>
</feature>
<feature type="binding site" evidence="1">
    <location>
        <begin position="151"/>
        <end position="153"/>
    </location>
    <ligand>
        <name>CTP</name>
        <dbReference type="ChEBI" id="CHEBI:37563"/>
        <note>allosteric inhibitor</note>
    </ligand>
</feature>
<feature type="binding site" evidence="1">
    <location>
        <begin position="191"/>
        <end position="196"/>
    </location>
    <ligand>
        <name>CTP</name>
        <dbReference type="ChEBI" id="CHEBI:37563"/>
        <note>allosteric inhibitor</note>
    </ligand>
</feature>
<feature type="binding site" evidence="1">
    <location>
        <begin position="191"/>
        <end position="196"/>
    </location>
    <ligand>
        <name>UTP</name>
        <dbReference type="ChEBI" id="CHEBI:46398"/>
    </ligand>
</feature>
<feature type="binding site" evidence="1">
    <location>
        <position position="227"/>
    </location>
    <ligand>
        <name>CTP</name>
        <dbReference type="ChEBI" id="CHEBI:37563"/>
        <note>allosteric inhibitor</note>
    </ligand>
</feature>
<feature type="binding site" evidence="1">
    <location>
        <position position="227"/>
    </location>
    <ligand>
        <name>UTP</name>
        <dbReference type="ChEBI" id="CHEBI:46398"/>
    </ligand>
</feature>
<feature type="binding site" evidence="1">
    <location>
        <position position="356"/>
    </location>
    <ligand>
        <name>L-glutamine</name>
        <dbReference type="ChEBI" id="CHEBI:58359"/>
    </ligand>
</feature>
<feature type="binding site" evidence="1">
    <location>
        <begin position="384"/>
        <end position="387"/>
    </location>
    <ligand>
        <name>L-glutamine</name>
        <dbReference type="ChEBI" id="CHEBI:58359"/>
    </ligand>
</feature>
<feature type="binding site" evidence="1">
    <location>
        <position position="407"/>
    </location>
    <ligand>
        <name>L-glutamine</name>
        <dbReference type="ChEBI" id="CHEBI:58359"/>
    </ligand>
</feature>
<feature type="binding site" evidence="1">
    <location>
        <position position="473"/>
    </location>
    <ligand>
        <name>L-glutamine</name>
        <dbReference type="ChEBI" id="CHEBI:58359"/>
    </ligand>
</feature>
<sequence>MTKFVFVTGGVVSSLGKGIAAASLAAILESRGLKVTLLKLDPYINVDPGTMSPFQHGEVFVTEDGAETDLDLGHYERFVSAKMRKSNNFTTGQIYESVIRKERRGEYLGKTVQVIPHITNEIQAFVERGAAASHDGKADVALVEIGGTVGDIESLPFLEAARQMSLRLGRNHCAFVHLTLVPFIASAGELKTKPTQHSVQKLREIGISPTALLCRADRPIPDDERAKISLFANIPQEAVISVWDADSIYKIPQMLNEQGLDRLICEELRLDPKPADLSMWQKLVKAQENPEHEITIGMVGKYVDLTESYKSLIEALRHAGMHTATRVNIEYIDSEELESGHLEVLQPLDAILVPGGFGKRGTEGKIRAIQYARENKVPYLGICLGMQLAVIEFARHVASMGDANSTEFNLDTEHPVVALITEWVDRDGKVEQRSADSDLGGTMRLGAQRVPIKTGTKASQIYGAEVNERHRHRYEVNNHYVPELEKAGMVISARTPTENLPEMMELPESMHPWFVGVQFHPEFTSTPRDGHPLFKAYVEAALAAQRQGA</sequence>